<evidence type="ECO:0000250" key="1"/>
<evidence type="ECO:0000255" key="2"/>
<evidence type="ECO:0000255" key="3">
    <source>
        <dbReference type="PROSITE-ProRule" id="PRU00107"/>
    </source>
</evidence>
<evidence type="ECO:0000269" key="4">
    <source>
    </source>
</evidence>
<evidence type="ECO:0000269" key="5">
    <source>
    </source>
</evidence>
<evidence type="ECO:0000269" key="6">
    <source>
    </source>
</evidence>
<evidence type="ECO:0000269" key="7">
    <source>
    </source>
</evidence>
<evidence type="ECO:0000269" key="8">
    <source>
    </source>
</evidence>
<evidence type="ECO:0000269" key="9">
    <source>
    </source>
</evidence>
<evidence type="ECO:0000269" key="10">
    <source>
    </source>
</evidence>
<evidence type="ECO:0000269" key="11">
    <source>
    </source>
</evidence>
<evidence type="ECO:0000269" key="12">
    <source>
    </source>
</evidence>
<evidence type="ECO:0000305" key="13"/>
<accession>O70571</accession>
<protein>
    <recommendedName>
        <fullName>[Pyruvate dehydrogenase (acetyl-transferring)] kinase isozyme 4, mitochondrial</fullName>
        <ecNumber>2.7.11.2</ecNumber>
    </recommendedName>
    <alternativeName>
        <fullName>Pyruvate dehydrogenase kinase isoform 4</fullName>
    </alternativeName>
</protein>
<gene>
    <name type="primary">Pdk4</name>
</gene>
<name>PDK4_MOUSE</name>
<dbReference type="EC" id="2.7.11.2"/>
<dbReference type="EMBL" id="AJ001418">
    <property type="protein sequence ID" value="CAA04752.1"/>
    <property type="molecule type" value="mRNA"/>
</dbReference>
<dbReference type="EMBL" id="AF239176">
    <property type="protein sequence ID" value="AAG44393.1"/>
    <property type="molecule type" value="Genomic_DNA"/>
</dbReference>
<dbReference type="EMBL" id="BC026134">
    <property type="protein sequence ID" value="AAH26134.1"/>
    <property type="molecule type" value="mRNA"/>
</dbReference>
<dbReference type="CCDS" id="CCDS19902.1"/>
<dbReference type="RefSeq" id="NP_038771.1">
    <property type="nucleotide sequence ID" value="NM_013743.2"/>
</dbReference>
<dbReference type="SMR" id="O70571"/>
<dbReference type="BioGRID" id="205153">
    <property type="interactions" value="6"/>
</dbReference>
<dbReference type="FunCoup" id="O70571">
    <property type="interactions" value="1416"/>
</dbReference>
<dbReference type="IntAct" id="O70571">
    <property type="interactions" value="2"/>
</dbReference>
<dbReference type="STRING" id="10090.ENSMUSP00000019721"/>
<dbReference type="ChEMBL" id="CHEMBL5465276"/>
<dbReference type="GlyGen" id="O70571">
    <property type="glycosylation" value="2 sites, 1 N-linked glycan (1 site)"/>
</dbReference>
<dbReference type="iPTMnet" id="O70571"/>
<dbReference type="PhosphoSitePlus" id="O70571"/>
<dbReference type="jPOST" id="O70571"/>
<dbReference type="PaxDb" id="10090-ENSMUSP00000019721"/>
<dbReference type="ProteomicsDB" id="288084"/>
<dbReference type="Pumba" id="O70571"/>
<dbReference type="Antibodypedia" id="15901">
    <property type="antibodies" value="622 antibodies from 36 providers"/>
</dbReference>
<dbReference type="DNASU" id="27273"/>
<dbReference type="Ensembl" id="ENSMUST00000019721.7">
    <property type="protein sequence ID" value="ENSMUSP00000019721.5"/>
    <property type="gene ID" value="ENSMUSG00000019577.7"/>
</dbReference>
<dbReference type="GeneID" id="27273"/>
<dbReference type="KEGG" id="mmu:27273"/>
<dbReference type="UCSC" id="uc009awk.1">
    <property type="organism name" value="mouse"/>
</dbReference>
<dbReference type="AGR" id="MGI:1351481"/>
<dbReference type="CTD" id="5166"/>
<dbReference type="MGI" id="MGI:1351481">
    <property type="gene designation" value="Pdk4"/>
</dbReference>
<dbReference type="VEuPathDB" id="HostDB:ENSMUSG00000019577"/>
<dbReference type="eggNOG" id="KOG0787">
    <property type="taxonomic scope" value="Eukaryota"/>
</dbReference>
<dbReference type="GeneTree" id="ENSGT01030000234646"/>
<dbReference type="HOGENOM" id="CLU_023861_1_1_1"/>
<dbReference type="InParanoid" id="O70571"/>
<dbReference type="OMA" id="HQENCPS"/>
<dbReference type="OrthoDB" id="241648at2759"/>
<dbReference type="PhylomeDB" id="O70571"/>
<dbReference type="TreeFam" id="TF314918"/>
<dbReference type="BRENDA" id="2.7.11.2">
    <property type="organism ID" value="3474"/>
</dbReference>
<dbReference type="Reactome" id="R-MMU-204174">
    <property type="pathway name" value="Regulation of pyruvate dehydrogenase (PDH) complex"/>
</dbReference>
<dbReference type="Reactome" id="R-MMU-5362517">
    <property type="pathway name" value="Signaling by Retinoic Acid"/>
</dbReference>
<dbReference type="BioGRID-ORCS" id="27273">
    <property type="hits" value="1 hit in 80 CRISPR screens"/>
</dbReference>
<dbReference type="ChiTaRS" id="Pdk4">
    <property type="organism name" value="mouse"/>
</dbReference>
<dbReference type="PRO" id="PR:O70571"/>
<dbReference type="Proteomes" id="UP000000589">
    <property type="component" value="Chromosome 6"/>
</dbReference>
<dbReference type="RNAct" id="O70571">
    <property type="molecule type" value="protein"/>
</dbReference>
<dbReference type="Bgee" id="ENSMUSG00000019577">
    <property type="expression patterns" value="Expressed in hindlimb stylopod muscle and 213 other cell types or tissues"/>
</dbReference>
<dbReference type="ExpressionAtlas" id="O70571">
    <property type="expression patterns" value="baseline and differential"/>
</dbReference>
<dbReference type="GO" id="GO:0005743">
    <property type="term" value="C:mitochondrial inner membrane"/>
    <property type="evidence" value="ECO:0007005"/>
    <property type="project" value="MGI"/>
</dbReference>
<dbReference type="GO" id="GO:0005759">
    <property type="term" value="C:mitochondrial matrix"/>
    <property type="evidence" value="ECO:0000304"/>
    <property type="project" value="Reactome"/>
</dbReference>
<dbReference type="GO" id="GO:0005739">
    <property type="term" value="C:mitochondrion"/>
    <property type="evidence" value="ECO:0007005"/>
    <property type="project" value="MGI"/>
</dbReference>
<dbReference type="GO" id="GO:0005524">
    <property type="term" value="F:ATP binding"/>
    <property type="evidence" value="ECO:0007669"/>
    <property type="project" value="UniProtKB-KW"/>
</dbReference>
<dbReference type="GO" id="GO:0004712">
    <property type="term" value="F:protein serine/threonine/tyrosine kinase activity"/>
    <property type="evidence" value="ECO:0000304"/>
    <property type="project" value="MGI"/>
</dbReference>
<dbReference type="GO" id="GO:0004740">
    <property type="term" value="F:pyruvate dehydrogenase (acetyl-transferring) kinase activity"/>
    <property type="evidence" value="ECO:0000250"/>
    <property type="project" value="UniProtKB"/>
</dbReference>
<dbReference type="GO" id="GO:0071398">
    <property type="term" value="P:cellular response to fatty acid"/>
    <property type="evidence" value="ECO:0000250"/>
    <property type="project" value="UniProtKB"/>
</dbReference>
<dbReference type="GO" id="GO:0009267">
    <property type="term" value="P:cellular response to starvation"/>
    <property type="evidence" value="ECO:0000250"/>
    <property type="project" value="UniProtKB"/>
</dbReference>
<dbReference type="GO" id="GO:0042593">
    <property type="term" value="P:glucose homeostasis"/>
    <property type="evidence" value="ECO:0000315"/>
    <property type="project" value="UniProtKB"/>
</dbReference>
<dbReference type="GO" id="GO:0008286">
    <property type="term" value="P:insulin receptor signaling pathway"/>
    <property type="evidence" value="ECO:0000315"/>
    <property type="project" value="UniProtKB"/>
</dbReference>
<dbReference type="GO" id="GO:2000811">
    <property type="term" value="P:negative regulation of anoikis"/>
    <property type="evidence" value="ECO:0007669"/>
    <property type="project" value="Ensembl"/>
</dbReference>
<dbReference type="GO" id="GO:0072593">
    <property type="term" value="P:reactive oxygen species metabolic process"/>
    <property type="evidence" value="ECO:0000250"/>
    <property type="project" value="UniProtKB"/>
</dbReference>
<dbReference type="GO" id="GO:0010510">
    <property type="term" value="P:regulation of acetyl-CoA biosynthetic process from pyruvate"/>
    <property type="evidence" value="ECO:0000315"/>
    <property type="project" value="UniProtKB"/>
</dbReference>
<dbReference type="GO" id="GO:0045124">
    <property type="term" value="P:regulation of bone resorption"/>
    <property type="evidence" value="ECO:0000315"/>
    <property type="project" value="UniProtKB"/>
</dbReference>
<dbReference type="GO" id="GO:0042304">
    <property type="term" value="P:regulation of fatty acid biosynthetic process"/>
    <property type="evidence" value="ECO:0000315"/>
    <property type="project" value="UniProtKB"/>
</dbReference>
<dbReference type="GO" id="GO:0046320">
    <property type="term" value="P:regulation of fatty acid oxidation"/>
    <property type="evidence" value="ECO:0000315"/>
    <property type="project" value="UniProtKB"/>
</dbReference>
<dbReference type="GO" id="GO:0010906">
    <property type="term" value="P:regulation of glucose metabolic process"/>
    <property type="evidence" value="ECO:0000315"/>
    <property type="project" value="UniProtKB"/>
</dbReference>
<dbReference type="GO" id="GO:0010565">
    <property type="term" value="P:regulation of ketone metabolic process"/>
    <property type="evidence" value="ECO:0000315"/>
    <property type="project" value="UniProtKB"/>
</dbReference>
<dbReference type="GO" id="GO:0006885">
    <property type="term" value="P:regulation of pH"/>
    <property type="evidence" value="ECO:0000315"/>
    <property type="project" value="UniProtKB"/>
</dbReference>
<dbReference type="GO" id="GO:0042594">
    <property type="term" value="P:response to starvation"/>
    <property type="evidence" value="ECO:0000315"/>
    <property type="project" value="UniProtKB"/>
</dbReference>
<dbReference type="CDD" id="cd16929">
    <property type="entry name" value="HATPase_PDK-like"/>
    <property type="match status" value="1"/>
</dbReference>
<dbReference type="FunFam" id="1.20.140.20:FF:000001">
    <property type="entry name" value="[Pyruvate dehydrogenase (acetyl-transferring)] kinase isozyme 2, mitochondrial"/>
    <property type="match status" value="1"/>
</dbReference>
<dbReference type="FunFam" id="3.30.565.10:FF:000007">
    <property type="entry name" value="Mitochondrial pyruvate dehydrogenase kinase isoform 2"/>
    <property type="match status" value="1"/>
</dbReference>
<dbReference type="Gene3D" id="1.20.140.20">
    <property type="entry name" value="Alpha-ketoacid/pyruvate dehydrogenase kinase, N-terminal domain"/>
    <property type="match status" value="1"/>
</dbReference>
<dbReference type="Gene3D" id="3.30.565.10">
    <property type="entry name" value="Histidine kinase-like ATPase, C-terminal domain"/>
    <property type="match status" value="1"/>
</dbReference>
<dbReference type="InterPro" id="IPR036784">
    <property type="entry name" value="AK/P_DHK_N_sf"/>
</dbReference>
<dbReference type="InterPro" id="IPR018955">
    <property type="entry name" value="BCDHK/PDK_N"/>
</dbReference>
<dbReference type="InterPro" id="IPR039028">
    <property type="entry name" value="BCKD/PDK"/>
</dbReference>
<dbReference type="InterPro" id="IPR036890">
    <property type="entry name" value="HATPase_C_sf"/>
</dbReference>
<dbReference type="InterPro" id="IPR005467">
    <property type="entry name" value="His_kinase_dom"/>
</dbReference>
<dbReference type="PANTHER" id="PTHR11947:SF22">
    <property type="entry name" value="[PYRUVATE DEHYDROGENASE (ACETYL-TRANSFERRING)] KINASE ISOZYME 4, MITOCHONDRIAL"/>
    <property type="match status" value="1"/>
</dbReference>
<dbReference type="PANTHER" id="PTHR11947">
    <property type="entry name" value="PYRUVATE DEHYDROGENASE KINASE"/>
    <property type="match status" value="1"/>
</dbReference>
<dbReference type="Pfam" id="PF10436">
    <property type="entry name" value="BCDHK_Adom3"/>
    <property type="match status" value="1"/>
</dbReference>
<dbReference type="Pfam" id="PF02518">
    <property type="entry name" value="HATPase_c"/>
    <property type="match status" value="1"/>
</dbReference>
<dbReference type="SMART" id="SM00387">
    <property type="entry name" value="HATPase_c"/>
    <property type="match status" value="1"/>
</dbReference>
<dbReference type="SUPFAM" id="SSF69012">
    <property type="entry name" value="alpha-ketoacid dehydrogenase kinase, N-terminal domain"/>
    <property type="match status" value="1"/>
</dbReference>
<dbReference type="SUPFAM" id="SSF55874">
    <property type="entry name" value="ATPase domain of HSP90 chaperone/DNA topoisomerase II/histidine kinase"/>
    <property type="match status" value="1"/>
</dbReference>
<dbReference type="PROSITE" id="PS50109">
    <property type="entry name" value="HIS_KIN"/>
    <property type="match status" value="1"/>
</dbReference>
<proteinExistence type="evidence at protein level"/>
<keyword id="KW-0067">ATP-binding</keyword>
<keyword id="KW-0418">Kinase</keyword>
<keyword id="KW-0496">Mitochondrion</keyword>
<keyword id="KW-0547">Nucleotide-binding</keyword>
<keyword id="KW-1185">Reference proteome</keyword>
<keyword id="KW-0808">Transferase</keyword>
<keyword id="KW-0809">Transit peptide</keyword>
<feature type="transit peptide" description="Mitochondrion" evidence="2">
    <location>
        <begin position="1"/>
        <end status="unknown"/>
    </location>
</feature>
<feature type="chain" id="PRO_0000023446" description="[Pyruvate dehydrogenase (acetyl-transferring)] kinase isozyme 4, mitochondrial">
    <location>
        <begin status="unknown"/>
        <end position="412"/>
    </location>
</feature>
<feature type="domain" description="Histidine kinase" evidence="3">
    <location>
        <begin position="138"/>
        <end position="368"/>
    </location>
</feature>
<feature type="binding site" evidence="1">
    <location>
        <begin position="254"/>
        <end position="261"/>
    </location>
    <ligand>
        <name>ATP</name>
        <dbReference type="ChEBI" id="CHEBI:30616"/>
    </ligand>
</feature>
<feature type="binding site" evidence="1">
    <location>
        <position position="293"/>
    </location>
    <ligand>
        <name>ATP</name>
        <dbReference type="ChEBI" id="CHEBI:30616"/>
    </ligand>
</feature>
<feature type="binding site" evidence="1">
    <location>
        <begin position="312"/>
        <end position="313"/>
    </location>
    <ligand>
        <name>ATP</name>
        <dbReference type="ChEBI" id="CHEBI:30616"/>
    </ligand>
</feature>
<feature type="binding site" evidence="1">
    <location>
        <begin position="329"/>
        <end position="334"/>
    </location>
    <ligand>
        <name>ATP</name>
        <dbReference type="ChEBI" id="CHEBI:30616"/>
    </ligand>
</feature>
<feature type="site" description="Interaction with the other subunit in the homodimer" evidence="1">
    <location>
        <position position="157"/>
    </location>
</feature>
<feature type="site" description="Interaction with the other subunit in the homodimer" evidence="1">
    <location>
        <position position="161"/>
    </location>
</feature>
<feature type="site" description="Interaction with the other subunit in the homodimer" evidence="1">
    <location>
        <position position="395"/>
    </location>
</feature>
<comment type="function">
    <text evidence="4 6 7 8 9 11">Kinase that plays a key role in regulation of glucose and fatty acid metabolism and homeostasis via phosphorylation of the pyruvate dehydrogenase subunits PDHA1 and PDHA2. This inhibits pyruvate dehydrogenase activity, and thereby regulates metabolite flux through the tricarboxylic acid cycle, down-regulates aerobic respiration and inhibits the formation of acetyl-coenzyme A from pyruvate. Inhibition of pyruvate dehydrogenase decreases glucose utilization and increases fat metabolism in response to prolonged fasting and starvation. Plays an important role in maintaining normal blood glucose levels under starvation, and is involved in the insulin signaling cascade. Via its regulation of pyruvate dehydrogenase activity, plays an important role in maintaining normal blood pH and in preventing the accumulation of ketone bodies under starvation. In the fed state, mediates cellular responses to glucose levels and to a high-fat diet. Regulates both fatty acid oxidation and de novo fatty acid biosynthesis. Plays a role in the generation of reactive oxygen species. Protects detached epithelial cells against anoikis. Plays a role in cell proliferation via its role in regulating carbohydrate and fatty acid metabolism.</text>
</comment>
<comment type="catalytic activity">
    <reaction>
        <text>L-seryl-[pyruvate dehydrogenase E1 alpha subunit] + ATP = O-phospho-L-seryl-[pyruvate dehydrogenase E1 alpha subunit] + ADP + H(+)</text>
        <dbReference type="Rhea" id="RHEA:23052"/>
        <dbReference type="Rhea" id="RHEA-COMP:13689"/>
        <dbReference type="Rhea" id="RHEA-COMP:13690"/>
        <dbReference type="ChEBI" id="CHEBI:15378"/>
        <dbReference type="ChEBI" id="CHEBI:29999"/>
        <dbReference type="ChEBI" id="CHEBI:30616"/>
        <dbReference type="ChEBI" id="CHEBI:83421"/>
        <dbReference type="ChEBI" id="CHEBI:456216"/>
        <dbReference type="EC" id="2.7.11.2"/>
    </reaction>
</comment>
<comment type="subunit">
    <text evidence="1">Homodimer. Interacts with the pyruvate dehydrogenase complex subunit DLAT, and is part of the multimeric pyruvate dehydrogenase complex that contains multiple copies of pyruvate dehydrogenase (E1), dihydrolipoamide acetyltransferase (DLAT, E2) and lipoamide dehydrogenase (DLD, E3) (By similarity).</text>
</comment>
<comment type="subcellular location">
    <subcellularLocation>
        <location evidence="1">Mitochondrion matrix</location>
    </subcellularLocation>
</comment>
<comment type="induction">
    <text evidence="5">Up-regulated by PPARD.</text>
</comment>
<comment type="disruption phenotype">
    <text evidence="4 7 8 10 11 12">No visible phenotype at birth. Mice have lower blood glucose and pyruvate levels after overnight fasting than normal, while the levels of ketone bodies are increased. After 48 hours of starving, their rate of glucose oxidation is increased, and glycolysis decreased, compared to wild type mice. Likewise, their rate of fatty acid oxidation is lower than normal in response to starvation. In contrast, there are no differences in blood glucose levels between fed mutant and wild type mice. In response to a high-fat diet, mutant mice have lower de novo fatty acid biosynthesis, and lower liver steatosis than wild-type. Mutant mice show normal bone formation and normal bone metabolism, excepting reduced bone loss when suspended to induce disuse osteoporosis.</text>
</comment>
<comment type="similarity">
    <text evidence="13">Belongs to the PDK/BCKDK protein kinase family.</text>
</comment>
<reference key="1">
    <citation type="submission" date="1997-09" db="EMBL/GenBank/DDBJ databases">
        <title>A novel gene in carnitine-deficient JVS mice.</title>
        <authorList>
            <person name="Horiuchi M."/>
            <person name="Kobayashi K."/>
            <person name="Masuda M."/>
            <person name="Saheki T."/>
        </authorList>
    </citation>
    <scope>NUCLEOTIDE SEQUENCE [MRNA]</scope>
    <source>
        <strain>C3H/HeJ</strain>
        <tissue>Heart</tissue>
    </source>
</reference>
<reference key="2">
    <citation type="submission" date="2000-02" db="EMBL/GenBank/DDBJ databases">
        <title>Promoter and partial structural region of Mus musculus pyruvate dehydrogenase kinase 4 (PDK4).</title>
        <authorList>
            <person name="Jeoung N.H."/>
            <person name="Bowker-Kinley M.M."/>
            <person name="Harris R.A."/>
        </authorList>
    </citation>
    <scope>NUCLEOTIDE SEQUENCE [GENOMIC DNA]</scope>
    <source>
        <strain>129/SvJ</strain>
    </source>
</reference>
<reference key="3">
    <citation type="journal article" date="2004" name="Genome Res.">
        <title>The status, quality, and expansion of the NIH full-length cDNA project: the Mammalian Gene Collection (MGC).</title>
        <authorList>
            <consortium name="The MGC Project Team"/>
        </authorList>
    </citation>
    <scope>NUCLEOTIDE SEQUENCE [LARGE SCALE MRNA]</scope>
    <source>
        <strain>FVB/N</strain>
        <tissue>Salivary gland</tissue>
    </source>
</reference>
<reference key="4">
    <citation type="journal article" date="2006" name="Biochem. J.">
        <title>Role of pyruvate dehydrogenase kinase isoenzyme 4 (PDHK4) in glucose homoeostasis during starvation.</title>
        <authorList>
            <person name="Jeoung N.H."/>
            <person name="Wu P."/>
            <person name="Joshi M.A."/>
            <person name="Jaskiewicz J."/>
            <person name="Bock C.B."/>
            <person name="Depaoli-Roach A.A."/>
            <person name="Harris R.A."/>
        </authorList>
    </citation>
    <scope>DISRUPTION PHENOTYPE</scope>
    <scope>FUNCTION</scope>
</reference>
<reference key="5">
    <citation type="journal article" date="2007" name="J. Mol. Biol.">
        <title>Three members of the human pyruvate dehydrogenase kinase gene family are direct targets of the peroxisome proliferator-activated receptor beta/delta.</title>
        <authorList>
            <person name="Degenhardt T."/>
            <person name="Saramaki A."/>
            <person name="Malinen M."/>
            <person name="Rieck M."/>
            <person name="Vaisanen S."/>
            <person name="Huotari A."/>
            <person name="Herzig K.H."/>
            <person name="Muller R."/>
            <person name="Carlberg C."/>
        </authorList>
    </citation>
    <scope>INDUCTION BY PPARD</scope>
</reference>
<reference key="6">
    <citation type="journal article" date="2008" name="Am. J. Physiol.">
        <title>Pyruvate dehydrogenase kinase-4 deficiency lowers blood glucose and improves glucose tolerance in diet-induced obese mice.</title>
        <authorList>
            <person name="Jeoung N.H."/>
            <person name="Harris R.A."/>
        </authorList>
    </citation>
    <scope>DISRUPTION PHENOTYPE</scope>
    <scope>FUNCTION</scope>
</reference>
<reference key="7">
    <citation type="journal article" date="2008" name="Am. J. Physiol.">
        <title>Overexpression of pyruvate dehydrogenase kinase 4 in heart perturbs metabolism and exacerbates calcineurin-induced cardiomyopathy.</title>
        <authorList>
            <person name="Zhao G."/>
            <person name="Jeoung N.H."/>
            <person name="Burgess S.C."/>
            <person name="Rosaaen-Stowe K.A."/>
            <person name="Inagaki T."/>
            <person name="Latif S."/>
            <person name="Shelton J.M."/>
            <person name="McAnally J."/>
            <person name="Bassel-Duby R."/>
            <person name="Harris R.A."/>
            <person name="Richardson J.A."/>
            <person name="Kliewer S.A."/>
        </authorList>
    </citation>
    <scope>FUNCTION</scope>
</reference>
<reference key="8">
    <citation type="journal article" date="2009" name="Biochem. J.">
        <title>Pyruvate dehydrogenase kinase isoenzyme 4 (PDHK4) deficiency attenuates the long-term negative effects of a high-saturated fat diet.</title>
        <authorList>
            <person name="Hwang B."/>
            <person name="Jeoung N.H."/>
            <person name="Harris R.A."/>
        </authorList>
    </citation>
    <scope>DISRUPTION PHENOTYPE</scope>
    <scope>FUNCTION</scope>
</reference>
<reference key="9">
    <citation type="journal article" date="2010" name="Cell">
        <title>A tissue-specific atlas of mouse protein phosphorylation and expression.</title>
        <authorList>
            <person name="Huttlin E.L."/>
            <person name="Jedrychowski M.P."/>
            <person name="Elias J.E."/>
            <person name="Goswami T."/>
            <person name="Rad R."/>
            <person name="Beausoleil S.A."/>
            <person name="Villen J."/>
            <person name="Haas W."/>
            <person name="Sowa M.E."/>
            <person name="Gygi S.P."/>
        </authorList>
    </citation>
    <scope>IDENTIFICATION BY MASS SPECTROMETRY [LARGE SCALE ANALYSIS]</scope>
    <source>
        <tissue>Brown adipose tissue</tissue>
        <tissue>Heart</tissue>
    </source>
</reference>
<reference key="10">
    <citation type="journal article" date="2011" name="J. Biol. Chem.">
        <title>Chronic inhibition of pyruvate dehydrogenase in heart triggers an adaptive metabolic response.</title>
        <authorList>
            <person name="Chambers K.T."/>
            <person name="Leone T.C."/>
            <person name="Sambandam N."/>
            <person name="Kovacs A."/>
            <person name="Wagg C.S."/>
            <person name="Lopaschuk G.D."/>
            <person name="Finck B.N."/>
            <person name="Kelly D.P."/>
        </authorList>
    </citation>
    <scope>FUNCTION</scope>
</reference>
<reference key="11">
    <citation type="journal article" date="2012" name="Biochem. J.">
        <title>Fasting induces ketoacidosis and hypothermia in PDHK2/PDHK4-double-knockout mice.</title>
        <authorList>
            <person name="Jeoung N.H."/>
            <person name="Rahimi Y."/>
            <person name="Wu P."/>
            <person name="Lee W.N."/>
            <person name="Harris R.A."/>
        </authorList>
    </citation>
    <scope>DISRUPTION PHENOTYPE</scope>
    <scope>FUNCTION</scope>
</reference>
<reference key="12">
    <citation type="journal article" date="2012" name="Bone">
        <title>Pyruvate dehydrogenase kinase 4 induces bone loss at unloading by promoting osteoclastogenesis.</title>
        <authorList>
            <person name="Wang Y."/>
            <person name="Liu W."/>
            <person name="Masuyama R."/>
            <person name="Fukuyama R."/>
            <person name="Ito M."/>
            <person name="Zhang Q."/>
            <person name="Komori H."/>
            <person name="Murakami T."/>
            <person name="Moriishi T."/>
            <person name="Miyazaki T."/>
            <person name="Kitazawa R."/>
            <person name="Yoshida C.A."/>
            <person name="Kawai Y."/>
            <person name="Izumi S."/>
            <person name="Komori T."/>
        </authorList>
    </citation>
    <scope>DISRUPTION PHENOTYPE</scope>
</reference>
<reference key="13">
    <citation type="journal article" date="2012" name="Cardiovasc. Res.">
        <title>Stimulation of glucose oxidation protects against acute myocardial infarction and reperfusion injury.</title>
        <authorList>
            <person name="Ussher J.R."/>
            <person name="Wang W."/>
            <person name="Gandhi M."/>
            <person name="Keung W."/>
            <person name="Samokhvalov V."/>
            <person name="Oka T."/>
            <person name="Wagg C.S."/>
            <person name="Jaswal J.S."/>
            <person name="Harris R.A."/>
            <person name="Clanachan A.S."/>
            <person name="Dyck J.R."/>
            <person name="Lopaschuk G.D."/>
        </authorList>
    </citation>
    <scope>DISRUPTION PHENOTYPE</scope>
</reference>
<sequence>MKAARFVMRSASSLSSASLVPREVELFSRYSPSPLSMKQLLDFGSENACERTSFAFLRQELPVRLANILKEIDILPDRLVNTPSVQLVKSWYIQSLMDLVEFHEKSPEDQKALSEFVDTLVKVRNRHHNVVPTMAQGILEYKDTCTVDPVTNQNLQYFLDRFYMNRISTRMLMNQHILIFSDSKTGNPSHIGSIDPNCDVVAVVQDAFECAKMLCDQYYLTSPELNLTQVNGKFPGQPIHIVYVPSHLHHMLFELFKNAMRATVEHQENRPSLTPVEATVVLGKEDLTIKISDRGGGVPLRITDRLFSYTYSTAPTPVMDNSRNAPLAGFGYGLPISRLYAKYFQGDLNLYSMSGYGTDAIIYLKALSSESVEKLPVFNKSAFKHYQMSSEADDWCIPSREPKNLAKEKLAV</sequence>
<organism>
    <name type="scientific">Mus musculus</name>
    <name type="common">Mouse</name>
    <dbReference type="NCBI Taxonomy" id="10090"/>
    <lineage>
        <taxon>Eukaryota</taxon>
        <taxon>Metazoa</taxon>
        <taxon>Chordata</taxon>
        <taxon>Craniata</taxon>
        <taxon>Vertebrata</taxon>
        <taxon>Euteleostomi</taxon>
        <taxon>Mammalia</taxon>
        <taxon>Eutheria</taxon>
        <taxon>Euarchontoglires</taxon>
        <taxon>Glires</taxon>
        <taxon>Rodentia</taxon>
        <taxon>Myomorpha</taxon>
        <taxon>Muroidea</taxon>
        <taxon>Muridae</taxon>
        <taxon>Murinae</taxon>
        <taxon>Mus</taxon>
        <taxon>Mus</taxon>
    </lineage>
</organism>